<evidence type="ECO:0000255" key="1">
    <source>
        <dbReference type="HAMAP-Rule" id="MF_04004"/>
    </source>
</evidence>
<comment type="function">
    <text evidence="1">Plays a role in viral genome replication by driving entry of quiescent cells into the cell cycle. Stimulation of progression from G1 to S phase allows the virus to efficiently use the cellular DNA replicating machinery to achieve viral genome replication. E7 protein has both transforming and trans-activating activities. Induces the disassembly of the E2F1 transcription factor from RB1, with subsequent transcriptional activation of E2F1-regulated S-phase genes. Interferes with host histone deacetylation mediated by HDAC1 and HDAC2, leading to transcription activation. Also plays a role in the inhibition of both antiviral and antiproliferative functions of host interferon alpha. Interaction with host TMEM173/STING impairs the ability of TMEM173/STING to sense cytosolic DNA and promote the production of type I interferon (IFN-alpha and IFN-beta).</text>
</comment>
<comment type="subunit">
    <text evidence="1">Homodimer. Homooligomer. Interacts with host RB1; this interaction induces dissociation of RB1-E2F1 complex thereby disrupting RB1 activity. Interacts with host EP300; this interaction represses EP300 transcriptional activity. Interacts with protein E2; this interaction inhibits E7 oncogenic activity. Interacts with host TMEM173/STING; this interaction impairs the ability of TMEM173/STING to sense cytosolic DNA and promote the production of type I interferon (IFN-alpha and IFN-beta).</text>
</comment>
<comment type="subcellular location">
    <subcellularLocation>
        <location evidence="1">Host cytoplasm</location>
    </subcellularLocation>
    <subcellularLocation>
        <location evidence="1">Host nucleus</location>
    </subcellularLocation>
    <text evidence="1">Predominantly found in the host nucleus.</text>
</comment>
<comment type="domain">
    <text evidence="1">The E7 terminal domain is an intrinsically disordered domain, whose flexibility and conformational transitions confer target adaptability to the oncoprotein. It allows adaptation to a variety of protein targets and exposes the PEST degradation sequence that regulates its turnover in the cell.</text>
</comment>
<comment type="PTM">
    <text evidence="1">Highly phosphorylated.</text>
</comment>
<comment type="similarity">
    <text evidence="1">Belongs to the papillomaviridae E7 protein family.</text>
</comment>
<sequence length="97" mass="10985">MHGKKPSVQDIVLDLKPTTETDLTCYESLDNSEDEDETDSHLERQAEQAWYRIVTDCSRCQSTVCLTIESTHADLLVLEDLLMGALKIVCPNCSRRL</sequence>
<keyword id="KW-0010">Activator</keyword>
<keyword id="KW-0238">DNA-binding</keyword>
<keyword id="KW-0244">Early protein</keyword>
<keyword id="KW-1078">G1/S host cell cycle checkpoint dysregulation by virus</keyword>
<keyword id="KW-1035">Host cytoplasm</keyword>
<keyword id="KW-1048">Host nucleus</keyword>
<keyword id="KW-0945">Host-virus interaction</keyword>
<keyword id="KW-1090">Inhibition of host innate immune response by virus</keyword>
<keyword id="KW-1114">Inhibition of host interferon signaling pathway by virus</keyword>
<keyword id="KW-0922">Interferon antiviral system evasion</keyword>
<keyword id="KW-0479">Metal-binding</keyword>
<keyword id="KW-1121">Modulation of host cell cycle by virus</keyword>
<keyword id="KW-0553">Oncogene</keyword>
<keyword id="KW-1185">Reference proteome</keyword>
<keyword id="KW-0804">Transcription</keyword>
<keyword id="KW-0805">Transcription regulation</keyword>
<keyword id="KW-0899">Viral immunoevasion</keyword>
<keyword id="KW-0862">Zinc</keyword>
<keyword id="KW-0863">Zinc-finger</keyword>
<dbReference type="EMBL" id="X74476">
    <property type="protein sequence ID" value="CAA52556.1"/>
    <property type="molecule type" value="Genomic_DNA"/>
</dbReference>
<dbReference type="PIR" id="S36516">
    <property type="entry name" value="S36516"/>
</dbReference>
<dbReference type="RefSeq" id="NP_041808.1">
    <property type="nucleotide sequence ID" value="NC_001587.1"/>
</dbReference>
<dbReference type="SMR" id="P36828"/>
<dbReference type="GeneID" id="1489432"/>
<dbReference type="KEGG" id="vg:1489432"/>
<dbReference type="OrthoDB" id="28045at10239"/>
<dbReference type="Proteomes" id="UP000009171">
    <property type="component" value="Genome"/>
</dbReference>
<dbReference type="GO" id="GO:0030430">
    <property type="term" value="C:host cell cytoplasm"/>
    <property type="evidence" value="ECO:0007669"/>
    <property type="project" value="UniProtKB-SubCell"/>
</dbReference>
<dbReference type="GO" id="GO:0042025">
    <property type="term" value="C:host cell nucleus"/>
    <property type="evidence" value="ECO:0007669"/>
    <property type="project" value="UniProtKB-SubCell"/>
</dbReference>
<dbReference type="GO" id="GO:0003677">
    <property type="term" value="F:DNA binding"/>
    <property type="evidence" value="ECO:0007669"/>
    <property type="project" value="UniProtKB-UniRule"/>
</dbReference>
<dbReference type="GO" id="GO:0003700">
    <property type="term" value="F:DNA-binding transcription factor activity"/>
    <property type="evidence" value="ECO:0007669"/>
    <property type="project" value="UniProtKB-UniRule"/>
</dbReference>
<dbReference type="GO" id="GO:0019904">
    <property type="term" value="F:protein domain specific binding"/>
    <property type="evidence" value="ECO:0007669"/>
    <property type="project" value="UniProtKB-UniRule"/>
</dbReference>
<dbReference type="GO" id="GO:0008270">
    <property type="term" value="F:zinc ion binding"/>
    <property type="evidence" value="ECO:0007669"/>
    <property type="project" value="UniProtKB-KW"/>
</dbReference>
<dbReference type="GO" id="GO:0006351">
    <property type="term" value="P:DNA-templated transcription"/>
    <property type="evidence" value="ECO:0007669"/>
    <property type="project" value="UniProtKB-UniRule"/>
</dbReference>
<dbReference type="GO" id="GO:0039645">
    <property type="term" value="P:symbiont-mediated perturbation of host cell cycle G1/S transition checkpoint"/>
    <property type="evidence" value="ECO:0007669"/>
    <property type="project" value="UniProtKB-UniRule"/>
</dbReference>
<dbReference type="GO" id="GO:0052170">
    <property type="term" value="P:symbiont-mediated suppression of host innate immune response"/>
    <property type="evidence" value="ECO:0007669"/>
    <property type="project" value="UniProtKB-KW"/>
</dbReference>
<dbReference type="GO" id="GO:0039502">
    <property type="term" value="P:symbiont-mediated suppression of host type I interferon-mediated signaling pathway"/>
    <property type="evidence" value="ECO:0007669"/>
    <property type="project" value="UniProtKB-UniRule"/>
</dbReference>
<dbReference type="Gene3D" id="3.30.160.330">
    <property type="match status" value="1"/>
</dbReference>
<dbReference type="HAMAP" id="MF_04004">
    <property type="entry name" value="PPV_E7"/>
    <property type="match status" value="1"/>
</dbReference>
<dbReference type="InterPro" id="IPR000148">
    <property type="entry name" value="Papilloma_E7"/>
</dbReference>
<dbReference type="Pfam" id="PF00527">
    <property type="entry name" value="E7"/>
    <property type="match status" value="1"/>
</dbReference>
<dbReference type="PIRSF" id="PIRSF003407">
    <property type="entry name" value="Papvi_E7"/>
    <property type="match status" value="1"/>
</dbReference>
<dbReference type="SUPFAM" id="SSF161234">
    <property type="entry name" value="E7 C-terminal domain-like"/>
    <property type="match status" value="1"/>
</dbReference>
<feature type="chain" id="PRO_0000133432" description="Protein E7">
    <location>
        <begin position="1"/>
        <end position="97"/>
    </location>
</feature>
<feature type="zinc finger region" evidence="1">
    <location>
        <begin position="57"/>
        <end position="93"/>
    </location>
</feature>
<feature type="region of interest" description="E7 terminal domain" evidence="1">
    <location>
        <begin position="1"/>
        <end position="44"/>
    </location>
</feature>
<feature type="short sequence motif" description="LXCXE motif; interaction with host RB1 and TMEM173/STING" evidence="1">
    <location>
        <begin position="23"/>
        <end position="27"/>
    </location>
</feature>
<feature type="short sequence motif" description="Nuclear export signal" evidence="1">
    <location>
        <begin position="75"/>
        <end position="83"/>
    </location>
</feature>
<reference key="1">
    <citation type="journal article" date="1994" name="Curr. Top. Microbiol. Immunol.">
        <title>Primer-directed sequencing of human papillomavirus types.</title>
        <authorList>
            <person name="Delius H."/>
            <person name="Hofmann B."/>
        </authorList>
    </citation>
    <scope>NUCLEOTIDE SEQUENCE [GENOMIC DNA]</scope>
</reference>
<reference key="2">
    <citation type="journal article" date="2002" name="Rev. Med. Virol.">
        <title>Interactions of SV40 large T antigen and other viral proteins with retinoblastoma tumour suppressor.</title>
        <authorList>
            <person name="Lee C."/>
            <person name="Cho Y."/>
        </authorList>
    </citation>
    <scope>REVIEW</scope>
</reference>
<organism>
    <name type="scientific">Human papillomavirus type 34</name>
    <dbReference type="NCBI Taxonomy" id="333764"/>
    <lineage>
        <taxon>Viruses</taxon>
        <taxon>Monodnaviria</taxon>
        <taxon>Shotokuvirae</taxon>
        <taxon>Cossaviricota</taxon>
        <taxon>Papovaviricetes</taxon>
        <taxon>Zurhausenvirales</taxon>
        <taxon>Papillomaviridae</taxon>
        <taxon>Firstpapillomavirinae</taxon>
        <taxon>Alphapapillomavirus</taxon>
        <taxon>Alphapapillomavirus 11</taxon>
    </lineage>
</organism>
<proteinExistence type="inferred from homology"/>
<protein>
    <recommendedName>
        <fullName evidence="1">Protein E7</fullName>
    </recommendedName>
</protein>
<accession>P36828</accession>
<name>VE7_HPV34</name>
<gene>
    <name evidence="1" type="primary">E7</name>
</gene>
<organismHost>
    <name type="scientific">Homo sapiens</name>
    <name type="common">Human</name>
    <dbReference type="NCBI Taxonomy" id="9606"/>
</organismHost>